<protein>
    <recommendedName>
        <fullName evidence="1">D-amino acid dehydrogenase</fullName>
        <ecNumber evidence="1">1.4.99.-</ecNumber>
    </recommendedName>
</protein>
<accession>Q8PGC9</accession>
<sequence length="429" mass="46675">MRVLILGSGVIGVTSAWYLAQAGCEVTVVDRQPAAALETSYANAGQLSFGYTSPWAAPGVPGKAVKWLFEQHAPLSIRPTRDLRQLAWLSQMLRNCTAERYAVNKARMVRMSDYSRDCLNALRAETGIEFEGRQLGTTQLFRTQQQLDAAAQDIEVLAQYGVPYELLSPAQIAQFEPGLAGGGAQMAGALRLPEDQTGDCRLFTQRLAELATQAGVTFRYGQQIERLEHAGGQITGVQIDGRIETADRYVLALGSYSADVLLSLGLHLPVYPLKGYSLTIPIVDAQRAPTSTVLDESYKIALTRFDDRIRVGGMAEVAGFDMSLNPRRRATLEMVVNDLFPGGGDLAQAEFWTGLRPATPDGTPVVGATPYANLFLNTGHGTLGWTMACGSGRYLADLMQGRTPEIDTEGLDVFRYLSPRSVRPHREAA</sequence>
<organism>
    <name type="scientific">Xanthomonas axonopodis pv. citri (strain 306)</name>
    <dbReference type="NCBI Taxonomy" id="190486"/>
    <lineage>
        <taxon>Bacteria</taxon>
        <taxon>Pseudomonadati</taxon>
        <taxon>Pseudomonadota</taxon>
        <taxon>Gammaproteobacteria</taxon>
        <taxon>Lysobacterales</taxon>
        <taxon>Lysobacteraceae</taxon>
        <taxon>Xanthomonas</taxon>
    </lineage>
</organism>
<dbReference type="EC" id="1.4.99.-" evidence="1"/>
<dbReference type="EMBL" id="AE008923">
    <property type="protein sequence ID" value="AAM38531.1"/>
    <property type="molecule type" value="Genomic_DNA"/>
</dbReference>
<dbReference type="RefSeq" id="WP_011052447.1">
    <property type="nucleotide sequence ID" value="NC_003919.1"/>
</dbReference>
<dbReference type="SMR" id="Q8PGC9"/>
<dbReference type="KEGG" id="xac:XAC3688"/>
<dbReference type="eggNOG" id="COG0665">
    <property type="taxonomic scope" value="Bacteria"/>
</dbReference>
<dbReference type="HOGENOM" id="CLU_007884_9_2_6"/>
<dbReference type="Proteomes" id="UP000000576">
    <property type="component" value="Chromosome"/>
</dbReference>
<dbReference type="GO" id="GO:0005737">
    <property type="term" value="C:cytoplasm"/>
    <property type="evidence" value="ECO:0007669"/>
    <property type="project" value="TreeGrafter"/>
</dbReference>
<dbReference type="GO" id="GO:0005886">
    <property type="term" value="C:plasma membrane"/>
    <property type="evidence" value="ECO:0007669"/>
    <property type="project" value="TreeGrafter"/>
</dbReference>
<dbReference type="GO" id="GO:0008718">
    <property type="term" value="F:D-amino-acid dehydrogenase activity"/>
    <property type="evidence" value="ECO:0007669"/>
    <property type="project" value="UniProtKB-UniRule"/>
</dbReference>
<dbReference type="GO" id="GO:0055130">
    <property type="term" value="P:D-alanine catabolic process"/>
    <property type="evidence" value="ECO:0007669"/>
    <property type="project" value="TreeGrafter"/>
</dbReference>
<dbReference type="FunFam" id="3.50.50.60:FF:000020">
    <property type="entry name" value="D-amino acid dehydrogenase"/>
    <property type="match status" value="1"/>
</dbReference>
<dbReference type="Gene3D" id="3.30.9.10">
    <property type="entry name" value="D-Amino Acid Oxidase, subunit A, domain 2"/>
    <property type="match status" value="1"/>
</dbReference>
<dbReference type="Gene3D" id="3.50.50.60">
    <property type="entry name" value="FAD/NAD(P)-binding domain"/>
    <property type="match status" value="2"/>
</dbReference>
<dbReference type="HAMAP" id="MF_01202">
    <property type="entry name" value="DadA"/>
    <property type="match status" value="1"/>
</dbReference>
<dbReference type="InterPro" id="IPR023080">
    <property type="entry name" value="DadA"/>
</dbReference>
<dbReference type="InterPro" id="IPR006076">
    <property type="entry name" value="FAD-dep_OxRdtase"/>
</dbReference>
<dbReference type="InterPro" id="IPR036188">
    <property type="entry name" value="FAD/NAD-bd_sf"/>
</dbReference>
<dbReference type="NCBIfam" id="NF001933">
    <property type="entry name" value="PRK00711.1"/>
    <property type="match status" value="1"/>
</dbReference>
<dbReference type="PANTHER" id="PTHR13847:SF280">
    <property type="entry name" value="D-AMINO ACID DEHYDROGENASE"/>
    <property type="match status" value="1"/>
</dbReference>
<dbReference type="PANTHER" id="PTHR13847">
    <property type="entry name" value="SARCOSINE DEHYDROGENASE-RELATED"/>
    <property type="match status" value="1"/>
</dbReference>
<dbReference type="Pfam" id="PF01266">
    <property type="entry name" value="DAO"/>
    <property type="match status" value="1"/>
</dbReference>
<dbReference type="SUPFAM" id="SSF54373">
    <property type="entry name" value="FAD-linked reductases, C-terminal domain"/>
    <property type="match status" value="1"/>
</dbReference>
<dbReference type="SUPFAM" id="SSF51905">
    <property type="entry name" value="FAD/NAD(P)-binding domain"/>
    <property type="match status" value="1"/>
</dbReference>
<name>DADA_XANAC</name>
<reference key="1">
    <citation type="journal article" date="2002" name="Nature">
        <title>Comparison of the genomes of two Xanthomonas pathogens with differing host specificities.</title>
        <authorList>
            <person name="da Silva A.C.R."/>
            <person name="Ferro J.A."/>
            <person name="Reinach F.C."/>
            <person name="Farah C.S."/>
            <person name="Furlan L.R."/>
            <person name="Quaggio R.B."/>
            <person name="Monteiro-Vitorello C.B."/>
            <person name="Van Sluys M.A."/>
            <person name="Almeida N.F. Jr."/>
            <person name="Alves L.M.C."/>
            <person name="do Amaral A.M."/>
            <person name="Bertolini M.C."/>
            <person name="Camargo L.E.A."/>
            <person name="Camarotte G."/>
            <person name="Cannavan F."/>
            <person name="Cardozo J."/>
            <person name="Chambergo F."/>
            <person name="Ciapina L.P."/>
            <person name="Cicarelli R.M.B."/>
            <person name="Coutinho L.L."/>
            <person name="Cursino-Santos J.R."/>
            <person name="El-Dorry H."/>
            <person name="Faria J.B."/>
            <person name="Ferreira A.J.S."/>
            <person name="Ferreira R.C.C."/>
            <person name="Ferro M.I.T."/>
            <person name="Formighieri E.F."/>
            <person name="Franco M.C."/>
            <person name="Greggio C.C."/>
            <person name="Gruber A."/>
            <person name="Katsuyama A.M."/>
            <person name="Kishi L.T."/>
            <person name="Leite R.P."/>
            <person name="Lemos E.G.M."/>
            <person name="Lemos M.V.F."/>
            <person name="Locali E.C."/>
            <person name="Machado M.A."/>
            <person name="Madeira A.M.B.N."/>
            <person name="Martinez-Rossi N.M."/>
            <person name="Martins E.C."/>
            <person name="Meidanis J."/>
            <person name="Menck C.F.M."/>
            <person name="Miyaki C.Y."/>
            <person name="Moon D.H."/>
            <person name="Moreira L.M."/>
            <person name="Novo M.T.M."/>
            <person name="Okura V.K."/>
            <person name="Oliveira M.C."/>
            <person name="Oliveira V.R."/>
            <person name="Pereira H.A."/>
            <person name="Rossi A."/>
            <person name="Sena J.A.D."/>
            <person name="Silva C."/>
            <person name="de Souza R.F."/>
            <person name="Spinola L.A.F."/>
            <person name="Takita M.A."/>
            <person name="Tamura R.E."/>
            <person name="Teixeira E.C."/>
            <person name="Tezza R.I.D."/>
            <person name="Trindade dos Santos M."/>
            <person name="Truffi D."/>
            <person name="Tsai S.M."/>
            <person name="White F.F."/>
            <person name="Setubal J.C."/>
            <person name="Kitajima J.P."/>
        </authorList>
    </citation>
    <scope>NUCLEOTIDE SEQUENCE [LARGE SCALE GENOMIC DNA]</scope>
    <source>
        <strain>306</strain>
    </source>
</reference>
<evidence type="ECO:0000255" key="1">
    <source>
        <dbReference type="HAMAP-Rule" id="MF_01202"/>
    </source>
</evidence>
<gene>
    <name evidence="1" type="primary">dadA</name>
    <name type="ordered locus">XAC3688</name>
</gene>
<feature type="chain" id="PRO_0000166155" description="D-amino acid dehydrogenase">
    <location>
        <begin position="1"/>
        <end position="429"/>
    </location>
</feature>
<feature type="binding site" evidence="1">
    <location>
        <begin position="3"/>
        <end position="17"/>
    </location>
    <ligand>
        <name>FAD</name>
        <dbReference type="ChEBI" id="CHEBI:57692"/>
    </ligand>
</feature>
<keyword id="KW-0274">FAD</keyword>
<keyword id="KW-0285">Flavoprotein</keyword>
<keyword id="KW-0560">Oxidoreductase</keyword>
<comment type="function">
    <text evidence="1">Oxidative deamination of D-amino acids.</text>
</comment>
<comment type="catalytic activity">
    <reaction evidence="1">
        <text>a D-alpha-amino acid + A + H2O = a 2-oxocarboxylate + AH2 + NH4(+)</text>
        <dbReference type="Rhea" id="RHEA:18125"/>
        <dbReference type="ChEBI" id="CHEBI:13193"/>
        <dbReference type="ChEBI" id="CHEBI:15377"/>
        <dbReference type="ChEBI" id="CHEBI:17499"/>
        <dbReference type="ChEBI" id="CHEBI:28938"/>
        <dbReference type="ChEBI" id="CHEBI:35179"/>
        <dbReference type="ChEBI" id="CHEBI:59871"/>
    </reaction>
</comment>
<comment type="cofactor">
    <cofactor evidence="1">
        <name>FAD</name>
        <dbReference type="ChEBI" id="CHEBI:57692"/>
    </cofactor>
</comment>
<comment type="similarity">
    <text evidence="1">Belongs to the DadA oxidoreductase family.</text>
</comment>
<proteinExistence type="inferred from homology"/>